<reference key="1">
    <citation type="journal article" date="1992" name="Virology">
        <title>The DNA sequence of equine herpesvirus-1.</title>
        <authorList>
            <person name="Telford E.A.R."/>
            <person name="Watson M.S."/>
            <person name="McBride K."/>
            <person name="Davison A.J."/>
        </authorList>
    </citation>
    <scope>NUCLEOTIDE SEQUENCE [LARGE SCALE GENOMIC DNA]</scope>
</reference>
<keyword id="KW-1035">Host cytoplasm</keyword>
<keyword id="KW-1048">Host nucleus</keyword>
<keyword id="KW-1185">Reference proteome</keyword>
<keyword id="KW-0946">Virion</keyword>
<keyword id="KW-0920">Virion tegument</keyword>
<name>TEG4_EHV1B</name>
<gene>
    <name type="ordered locus">40</name>
</gene>
<feature type="chain" id="PRO_0000115974" description="Tegument protein UL21 homolog">
    <location>
        <begin position="1"/>
        <end position="530"/>
    </location>
</feature>
<accession>P28972</accession>
<accession>Q6DLH0</accession>
<organismHost>
    <name type="scientific">Equus caballus</name>
    <name type="common">Horse</name>
    <dbReference type="NCBI Taxonomy" id="9796"/>
</organismHost>
<evidence type="ECO:0000250" key="1"/>
<evidence type="ECO:0000305" key="2"/>
<protein>
    <recommendedName>
        <fullName>Tegument protein UL21 homolog</fullName>
    </recommendedName>
</protein>
<dbReference type="EMBL" id="AY665713">
    <property type="protein sequence ID" value="AAT67298.1"/>
    <property type="molecule type" value="Genomic_DNA"/>
</dbReference>
<dbReference type="PIR" id="F36799">
    <property type="entry name" value="WZBED4"/>
</dbReference>
<dbReference type="SMR" id="P28972"/>
<dbReference type="KEGG" id="vg:1487535"/>
<dbReference type="Proteomes" id="UP000001189">
    <property type="component" value="Segment"/>
</dbReference>
<dbReference type="GO" id="GO:0030430">
    <property type="term" value="C:host cell cytoplasm"/>
    <property type="evidence" value="ECO:0007669"/>
    <property type="project" value="UniProtKB-SubCell"/>
</dbReference>
<dbReference type="GO" id="GO:0042025">
    <property type="term" value="C:host cell nucleus"/>
    <property type="evidence" value="ECO:0007669"/>
    <property type="project" value="UniProtKB-SubCell"/>
</dbReference>
<dbReference type="GO" id="GO:0019033">
    <property type="term" value="C:viral tegument"/>
    <property type="evidence" value="ECO:0007669"/>
    <property type="project" value="UniProtKB-SubCell"/>
</dbReference>
<dbReference type="InterPro" id="IPR004936">
    <property type="entry name" value="Herpes_UL21"/>
</dbReference>
<dbReference type="Pfam" id="PF03252">
    <property type="entry name" value="Herpes_UL21"/>
    <property type="match status" value="1"/>
</dbReference>
<proteinExistence type="inferred from homology"/>
<comment type="function">
    <text evidence="1">May participate in DNA packaging/capsid maturation events. Promotes efficient incorporation of tegument proteins UL46, UL49, and US3 homologs into virions. May also play a role in capsid transport to the trans-Golgi network (TGN) (By similarity).</text>
</comment>
<comment type="subunit">
    <text evidence="1">Interacts (via C-terminus) with UL16.</text>
</comment>
<comment type="subcellular location">
    <subcellularLocation>
        <location evidence="1">Virion tegument</location>
    </subcellularLocation>
    <subcellularLocation>
        <location evidence="1">Host cytoplasm</location>
    </subcellularLocation>
    <subcellularLocation>
        <location evidence="1">Host nucleus</location>
    </subcellularLocation>
</comment>
<comment type="similarity">
    <text evidence="2">Belongs to the alphaherpesvirinae UL21 protein family.</text>
</comment>
<sequence>MDFKYSDTVIHNGVVFYITDGGHRVYFLYGGCLLSVPRPHATAESGEIAKFGLTLRGLTHNDRVVANYVRSELNRTGRHESAPSSEEDVFVDRLEVLAQGAQAFGRDICGSFDLEVYDPYLAECMVSLKVTSGLIVSTGRDIPQDGMLHLYTVPTITNASSGFIYTPNIACFTLVQAYLTELPPELETLISGLFDRIPVARPPLRDESGGHSRTDIIVTSPRAVKTMAIGGTTRCSKRPLRKTVVSDFVQVRLIPKPCSIWDSASRVASGASLQSLQLLFKIADEIILIEEPWPGLDEHLNQARSTIVDAILAVYGNEGKLRFFGGKLTQQGVTTLQRFVLCQFILGKWNLINCYAALEQLAESYIGAVPEARDPLPDPHLVADAVNEIIRESGILGELCEIIVRYTQPTDPVNGSGSEVVELEARLLAEFAANATRVELGLSSYDEVRNMEARIASVLNKLYAKDGIGGAAQVACRILGSGLPVAIVLNVSSITAFDGLDLSRKGAYYLYYLLSERLKRGGVTVHVSRK</sequence>
<organism>
    <name type="scientific">Equine herpesvirus 1 (strain Ab4p)</name>
    <name type="common">EHV-1</name>
    <name type="synonym">Equine abortion virus</name>
    <dbReference type="NCBI Taxonomy" id="31520"/>
    <lineage>
        <taxon>Viruses</taxon>
        <taxon>Duplodnaviria</taxon>
        <taxon>Heunggongvirae</taxon>
        <taxon>Peploviricota</taxon>
        <taxon>Herviviricetes</taxon>
        <taxon>Herpesvirales</taxon>
        <taxon>Orthoherpesviridae</taxon>
        <taxon>Alphaherpesvirinae</taxon>
        <taxon>Varicellovirus</taxon>
        <taxon>Varicellovirus equidalpha1</taxon>
        <taxon>Equid alphaherpesvirus 1</taxon>
    </lineage>
</organism>